<proteinExistence type="predicted"/>
<organismHost>
    <name type="scientific">Mycobacterium</name>
    <dbReference type="NCBI Taxonomy" id="1763"/>
</organismHost>
<dbReference type="EMBL" id="AF022214">
    <property type="protein sequence ID" value="AAC18448.1"/>
    <property type="molecule type" value="Genomic_DNA"/>
</dbReference>
<dbReference type="PIR" id="E72800">
    <property type="entry name" value="E72800"/>
</dbReference>
<dbReference type="RefSeq" id="NP_046823.1">
    <property type="nucleotide sequence ID" value="NC_001900.1"/>
</dbReference>
<dbReference type="GeneID" id="1261577"/>
<dbReference type="KEGG" id="vg:1261577"/>
<dbReference type="OrthoDB" id="16531at10239"/>
<dbReference type="Proteomes" id="UP000002131">
    <property type="component" value="Segment"/>
</dbReference>
<evidence type="ECO:0000256" key="1">
    <source>
        <dbReference type="SAM" id="MobiDB-lite"/>
    </source>
</evidence>
<organism>
    <name type="scientific">Mycobacterium phage D29</name>
    <name type="common">Mycobacteriophage D29</name>
    <dbReference type="NCBI Taxonomy" id="28369"/>
    <lineage>
        <taxon>Viruses</taxon>
        <taxon>Duplodnaviria</taxon>
        <taxon>Heunggongvirae</taxon>
        <taxon>Uroviricota</taxon>
        <taxon>Caudoviricetes</taxon>
        <taxon>Fromanvirus</taxon>
    </lineage>
</organism>
<sequence>MGTRGPIGKRDEERVRRNTPENPTETISMIGTVEIPELGDMSYMGETHPLIEEMYDAIKQSAAVKFYEPTDWQFARLALYTLNQELIAAKHQGKPIGAMKLTAINQMLSALLLTEGDRRRVRLEIERAPADPTGGKVVDVTDVLKQRLAKASGGG</sequence>
<feature type="chain" id="PRO_0000164704" description="Gene 5 protein">
    <location>
        <begin position="1"/>
        <end position="155"/>
    </location>
</feature>
<feature type="region of interest" description="Disordered" evidence="1">
    <location>
        <begin position="1"/>
        <end position="24"/>
    </location>
</feature>
<feature type="compositionally biased region" description="Basic and acidic residues" evidence="1">
    <location>
        <begin position="8"/>
        <end position="19"/>
    </location>
</feature>
<reference key="1">
    <citation type="journal article" date="1998" name="J. Mol. Biol.">
        <title>Genome structure of mycobacteriophage D29: implications for phage evolution.</title>
        <authorList>
            <person name="Ford M.E."/>
            <person name="Sarkis G.J."/>
            <person name="Belanger A.E."/>
            <person name="Hendrix R.W."/>
            <person name="Hatfull G.F."/>
        </authorList>
    </citation>
    <scope>NUCLEOTIDE SEQUENCE [LARGE SCALE GENOMIC DNA]</scope>
</reference>
<keyword id="KW-1185">Reference proteome</keyword>
<accession>O64201</accession>
<name>VG05_BPMD2</name>
<gene>
    <name type="primary">5</name>
</gene>
<protein>
    <recommendedName>
        <fullName>Gene 5 protein</fullName>
    </recommendedName>
    <alternativeName>
        <fullName>Gp5</fullName>
    </alternativeName>
</protein>